<accession>A3D7C9</accession>
<sequence length="149" mass="17060">MHCPFCSATDTKVIDSRLVAEGHQVRRRRECTECHERFTTFEGAELVMPRVIKRDGSRQPFDEEKLQGGMLRAVEKRPVSMDEIEQALSKIKSTLRATGEREVPSEMVGNLMMEQLMSLDKVAYIRFASVYRAFEDVSEFGEAIAKLQK</sequence>
<keyword id="KW-0067">ATP-binding</keyword>
<keyword id="KW-0238">DNA-binding</keyword>
<keyword id="KW-0479">Metal-binding</keyword>
<keyword id="KW-0547">Nucleotide-binding</keyword>
<keyword id="KW-1185">Reference proteome</keyword>
<keyword id="KW-0678">Repressor</keyword>
<keyword id="KW-0804">Transcription</keyword>
<keyword id="KW-0805">Transcription regulation</keyword>
<keyword id="KW-0862">Zinc</keyword>
<keyword id="KW-0863">Zinc-finger</keyword>
<organism>
    <name type="scientific">Shewanella baltica (strain OS155 / ATCC BAA-1091)</name>
    <dbReference type="NCBI Taxonomy" id="325240"/>
    <lineage>
        <taxon>Bacteria</taxon>
        <taxon>Pseudomonadati</taxon>
        <taxon>Pseudomonadota</taxon>
        <taxon>Gammaproteobacteria</taxon>
        <taxon>Alteromonadales</taxon>
        <taxon>Shewanellaceae</taxon>
        <taxon>Shewanella</taxon>
    </lineage>
</organism>
<gene>
    <name evidence="1" type="primary">nrdR</name>
    <name type="ordered locus">Sbal_3161</name>
</gene>
<protein>
    <recommendedName>
        <fullName evidence="1">Transcriptional repressor NrdR</fullName>
    </recommendedName>
</protein>
<comment type="function">
    <text evidence="1">Negatively regulates transcription of bacterial ribonucleotide reductase nrd genes and operons by binding to NrdR-boxes.</text>
</comment>
<comment type="cofactor">
    <cofactor evidence="1">
        <name>Zn(2+)</name>
        <dbReference type="ChEBI" id="CHEBI:29105"/>
    </cofactor>
    <text evidence="1">Binds 1 zinc ion.</text>
</comment>
<comment type="similarity">
    <text evidence="1">Belongs to the NrdR family.</text>
</comment>
<name>NRDR_SHEB5</name>
<evidence type="ECO:0000255" key="1">
    <source>
        <dbReference type="HAMAP-Rule" id="MF_00440"/>
    </source>
</evidence>
<feature type="chain" id="PRO_1000080822" description="Transcriptional repressor NrdR">
    <location>
        <begin position="1"/>
        <end position="149"/>
    </location>
</feature>
<feature type="domain" description="ATP-cone" evidence="1">
    <location>
        <begin position="49"/>
        <end position="139"/>
    </location>
</feature>
<feature type="zinc finger region" evidence="1">
    <location>
        <begin position="3"/>
        <end position="34"/>
    </location>
</feature>
<dbReference type="EMBL" id="CP000563">
    <property type="protein sequence ID" value="ABN62642.1"/>
    <property type="molecule type" value="Genomic_DNA"/>
</dbReference>
<dbReference type="RefSeq" id="WP_006082643.1">
    <property type="nucleotide sequence ID" value="NC_009052.1"/>
</dbReference>
<dbReference type="SMR" id="A3D7C9"/>
<dbReference type="STRING" id="325240.Sbal_3161"/>
<dbReference type="GeneID" id="11773354"/>
<dbReference type="KEGG" id="sbl:Sbal_3161"/>
<dbReference type="HOGENOM" id="CLU_108412_0_0_6"/>
<dbReference type="OrthoDB" id="9807461at2"/>
<dbReference type="Proteomes" id="UP000001557">
    <property type="component" value="Chromosome"/>
</dbReference>
<dbReference type="GO" id="GO:0005524">
    <property type="term" value="F:ATP binding"/>
    <property type="evidence" value="ECO:0007669"/>
    <property type="project" value="UniProtKB-KW"/>
</dbReference>
<dbReference type="GO" id="GO:0003677">
    <property type="term" value="F:DNA binding"/>
    <property type="evidence" value="ECO:0007669"/>
    <property type="project" value="UniProtKB-KW"/>
</dbReference>
<dbReference type="GO" id="GO:0008270">
    <property type="term" value="F:zinc ion binding"/>
    <property type="evidence" value="ECO:0007669"/>
    <property type="project" value="UniProtKB-UniRule"/>
</dbReference>
<dbReference type="GO" id="GO:0045892">
    <property type="term" value="P:negative regulation of DNA-templated transcription"/>
    <property type="evidence" value="ECO:0007669"/>
    <property type="project" value="UniProtKB-UniRule"/>
</dbReference>
<dbReference type="HAMAP" id="MF_00440">
    <property type="entry name" value="NrdR"/>
    <property type="match status" value="1"/>
</dbReference>
<dbReference type="InterPro" id="IPR005144">
    <property type="entry name" value="ATP-cone_dom"/>
</dbReference>
<dbReference type="InterPro" id="IPR055173">
    <property type="entry name" value="NrdR-like_N"/>
</dbReference>
<dbReference type="InterPro" id="IPR003796">
    <property type="entry name" value="RNR_NrdR-like"/>
</dbReference>
<dbReference type="NCBIfam" id="TIGR00244">
    <property type="entry name" value="transcriptional regulator NrdR"/>
    <property type="match status" value="1"/>
</dbReference>
<dbReference type="PANTHER" id="PTHR30455">
    <property type="entry name" value="TRANSCRIPTIONAL REPRESSOR NRDR"/>
    <property type="match status" value="1"/>
</dbReference>
<dbReference type="PANTHER" id="PTHR30455:SF2">
    <property type="entry name" value="TRANSCRIPTIONAL REPRESSOR NRDR"/>
    <property type="match status" value="1"/>
</dbReference>
<dbReference type="Pfam" id="PF03477">
    <property type="entry name" value="ATP-cone"/>
    <property type="match status" value="1"/>
</dbReference>
<dbReference type="Pfam" id="PF22811">
    <property type="entry name" value="Zn_ribbon_NrdR"/>
    <property type="match status" value="1"/>
</dbReference>
<dbReference type="PROSITE" id="PS51161">
    <property type="entry name" value="ATP_CONE"/>
    <property type="match status" value="1"/>
</dbReference>
<reference key="1">
    <citation type="submission" date="2007-02" db="EMBL/GenBank/DDBJ databases">
        <title>Complete sequence of chromosome of Shewanella baltica OS155.</title>
        <authorList>
            <consortium name="US DOE Joint Genome Institute"/>
            <person name="Copeland A."/>
            <person name="Lucas S."/>
            <person name="Lapidus A."/>
            <person name="Barry K."/>
            <person name="Detter J.C."/>
            <person name="Glavina del Rio T."/>
            <person name="Hammon N."/>
            <person name="Israni S."/>
            <person name="Dalin E."/>
            <person name="Tice H."/>
            <person name="Pitluck S."/>
            <person name="Sims D.R."/>
            <person name="Brettin T."/>
            <person name="Bruce D."/>
            <person name="Han C."/>
            <person name="Tapia R."/>
            <person name="Brainard J."/>
            <person name="Schmutz J."/>
            <person name="Larimer F."/>
            <person name="Land M."/>
            <person name="Hauser L."/>
            <person name="Kyrpides N."/>
            <person name="Mikhailova N."/>
            <person name="Brettar I."/>
            <person name="Klappenbach J."/>
            <person name="Konstantinidis K."/>
            <person name="Rodrigues J."/>
            <person name="Tiedje J."/>
            <person name="Richardson P."/>
        </authorList>
    </citation>
    <scope>NUCLEOTIDE SEQUENCE [LARGE SCALE GENOMIC DNA]</scope>
    <source>
        <strain>OS155 / ATCC BAA-1091</strain>
    </source>
</reference>
<proteinExistence type="inferred from homology"/>